<gene>
    <name evidence="1" type="primary">mdh</name>
    <name type="ordered locus">Bind_3604</name>
</gene>
<name>MDH_BEII9</name>
<dbReference type="EC" id="1.1.1.37" evidence="1"/>
<dbReference type="EMBL" id="CP001016">
    <property type="protein sequence ID" value="ACB97159.1"/>
    <property type="molecule type" value="Genomic_DNA"/>
</dbReference>
<dbReference type="RefSeq" id="WP_012386507.1">
    <property type="nucleotide sequence ID" value="NC_010581.1"/>
</dbReference>
<dbReference type="SMR" id="B2IG85"/>
<dbReference type="STRING" id="395963.Bind_3604"/>
<dbReference type="KEGG" id="bid:Bind_3604"/>
<dbReference type="eggNOG" id="COG0039">
    <property type="taxonomic scope" value="Bacteria"/>
</dbReference>
<dbReference type="HOGENOM" id="CLU_045401_2_1_5"/>
<dbReference type="OrthoDB" id="9802969at2"/>
<dbReference type="Proteomes" id="UP000001695">
    <property type="component" value="Chromosome"/>
</dbReference>
<dbReference type="GO" id="GO:0004459">
    <property type="term" value="F:L-lactate dehydrogenase activity"/>
    <property type="evidence" value="ECO:0007669"/>
    <property type="project" value="TreeGrafter"/>
</dbReference>
<dbReference type="GO" id="GO:0030060">
    <property type="term" value="F:L-malate dehydrogenase (NAD+) activity"/>
    <property type="evidence" value="ECO:0007669"/>
    <property type="project" value="UniProtKB-UniRule"/>
</dbReference>
<dbReference type="GO" id="GO:0006089">
    <property type="term" value="P:lactate metabolic process"/>
    <property type="evidence" value="ECO:0007669"/>
    <property type="project" value="TreeGrafter"/>
</dbReference>
<dbReference type="GO" id="GO:0006099">
    <property type="term" value="P:tricarboxylic acid cycle"/>
    <property type="evidence" value="ECO:0007669"/>
    <property type="project" value="UniProtKB-UniRule"/>
</dbReference>
<dbReference type="CDD" id="cd01339">
    <property type="entry name" value="LDH-like_MDH"/>
    <property type="match status" value="1"/>
</dbReference>
<dbReference type="FunFam" id="3.40.50.720:FF:000018">
    <property type="entry name" value="Malate dehydrogenase"/>
    <property type="match status" value="1"/>
</dbReference>
<dbReference type="FunFam" id="3.90.110.10:FF:000004">
    <property type="entry name" value="Malate dehydrogenase"/>
    <property type="match status" value="1"/>
</dbReference>
<dbReference type="Gene3D" id="3.90.110.10">
    <property type="entry name" value="Lactate dehydrogenase/glycoside hydrolase, family 4, C-terminal"/>
    <property type="match status" value="1"/>
</dbReference>
<dbReference type="Gene3D" id="3.40.50.720">
    <property type="entry name" value="NAD(P)-binding Rossmann-like Domain"/>
    <property type="match status" value="1"/>
</dbReference>
<dbReference type="HAMAP" id="MF_00487">
    <property type="entry name" value="Malate_dehydrog_3"/>
    <property type="match status" value="1"/>
</dbReference>
<dbReference type="InterPro" id="IPR001557">
    <property type="entry name" value="L-lactate/malate_DH"/>
</dbReference>
<dbReference type="InterPro" id="IPR022383">
    <property type="entry name" value="Lactate/malate_DH_C"/>
</dbReference>
<dbReference type="InterPro" id="IPR001236">
    <property type="entry name" value="Lactate/malate_DH_N"/>
</dbReference>
<dbReference type="InterPro" id="IPR015955">
    <property type="entry name" value="Lactate_DH/Glyco_Ohase_4_C"/>
</dbReference>
<dbReference type="InterPro" id="IPR011275">
    <property type="entry name" value="Malate_DH_type3"/>
</dbReference>
<dbReference type="InterPro" id="IPR036291">
    <property type="entry name" value="NAD(P)-bd_dom_sf"/>
</dbReference>
<dbReference type="NCBIfam" id="TIGR01763">
    <property type="entry name" value="MalateDH_bact"/>
    <property type="match status" value="1"/>
</dbReference>
<dbReference type="NCBIfam" id="NF004863">
    <property type="entry name" value="PRK06223.1"/>
    <property type="match status" value="1"/>
</dbReference>
<dbReference type="PANTHER" id="PTHR43128">
    <property type="entry name" value="L-2-HYDROXYCARBOXYLATE DEHYDROGENASE (NAD(P)(+))"/>
    <property type="match status" value="1"/>
</dbReference>
<dbReference type="PANTHER" id="PTHR43128:SF16">
    <property type="entry name" value="L-LACTATE DEHYDROGENASE"/>
    <property type="match status" value="1"/>
</dbReference>
<dbReference type="Pfam" id="PF02866">
    <property type="entry name" value="Ldh_1_C"/>
    <property type="match status" value="1"/>
</dbReference>
<dbReference type="Pfam" id="PF00056">
    <property type="entry name" value="Ldh_1_N"/>
    <property type="match status" value="1"/>
</dbReference>
<dbReference type="PIRSF" id="PIRSF000102">
    <property type="entry name" value="Lac_mal_DH"/>
    <property type="match status" value="1"/>
</dbReference>
<dbReference type="PRINTS" id="PR00086">
    <property type="entry name" value="LLDHDRGNASE"/>
</dbReference>
<dbReference type="SUPFAM" id="SSF56327">
    <property type="entry name" value="LDH C-terminal domain-like"/>
    <property type="match status" value="1"/>
</dbReference>
<dbReference type="SUPFAM" id="SSF51735">
    <property type="entry name" value="NAD(P)-binding Rossmann-fold domains"/>
    <property type="match status" value="1"/>
</dbReference>
<comment type="function">
    <text evidence="1">Catalyzes the reversible oxidation of malate to oxaloacetate.</text>
</comment>
<comment type="catalytic activity">
    <reaction evidence="1">
        <text>(S)-malate + NAD(+) = oxaloacetate + NADH + H(+)</text>
        <dbReference type="Rhea" id="RHEA:21432"/>
        <dbReference type="ChEBI" id="CHEBI:15378"/>
        <dbReference type="ChEBI" id="CHEBI:15589"/>
        <dbReference type="ChEBI" id="CHEBI:16452"/>
        <dbReference type="ChEBI" id="CHEBI:57540"/>
        <dbReference type="ChEBI" id="CHEBI:57945"/>
        <dbReference type="EC" id="1.1.1.37"/>
    </reaction>
</comment>
<comment type="similarity">
    <text evidence="1">Belongs to the LDH/MDH superfamily. MDH type 3 family.</text>
</comment>
<sequence>MARNKIALIGAGQIGGTLAHLAGLKELGDIVLFDIAEGTPQGKALDLAESAPVDGFNAHLSGANDYSAIEGADVVIVTAGVPRKPGMSRDDLLGINLKVMESVGAGIKTYAKDAFVICITNPLDAMVWALQKASGLPPQKVVGMAGVLDSARFRYFLSDEFKVSVEDVTAFVLGGHGDDMVPLLRYSTVAGIPLPDLVKIGWTTQEKLDAIVKRTRGGGGEIVNLLKTGSAFYAPAASAIAMAESYLKDKRRVLPVAAQLNGEYGVDKLYVGVPVVIGANGVEKVVEITLDDAEKELFKKSVASVQGLVEACKTINPAFA</sequence>
<organism>
    <name type="scientific">Beijerinckia indica subsp. indica (strain ATCC 9039 / DSM 1715 / NCIMB 8712)</name>
    <dbReference type="NCBI Taxonomy" id="395963"/>
    <lineage>
        <taxon>Bacteria</taxon>
        <taxon>Pseudomonadati</taxon>
        <taxon>Pseudomonadota</taxon>
        <taxon>Alphaproteobacteria</taxon>
        <taxon>Hyphomicrobiales</taxon>
        <taxon>Beijerinckiaceae</taxon>
        <taxon>Beijerinckia</taxon>
    </lineage>
</organism>
<evidence type="ECO:0000255" key="1">
    <source>
        <dbReference type="HAMAP-Rule" id="MF_00487"/>
    </source>
</evidence>
<reference key="1">
    <citation type="journal article" date="2010" name="J. Bacteriol.">
        <title>Complete genome sequence of Beijerinckia indica subsp. indica.</title>
        <authorList>
            <person name="Tamas I."/>
            <person name="Dedysh S.N."/>
            <person name="Liesack W."/>
            <person name="Stott M.B."/>
            <person name="Alam M."/>
            <person name="Murrell J.C."/>
            <person name="Dunfield P.F."/>
        </authorList>
    </citation>
    <scope>NUCLEOTIDE SEQUENCE [LARGE SCALE GENOMIC DNA]</scope>
    <source>
        <strain>ATCC 9039 / DSM 1715 / NCIMB 8712</strain>
    </source>
</reference>
<keyword id="KW-0520">NAD</keyword>
<keyword id="KW-0560">Oxidoreductase</keyword>
<keyword id="KW-1185">Reference proteome</keyword>
<keyword id="KW-0816">Tricarboxylic acid cycle</keyword>
<proteinExistence type="inferred from homology"/>
<accession>B2IG85</accession>
<feature type="chain" id="PRO_1000126126" description="Malate dehydrogenase">
    <location>
        <begin position="1"/>
        <end position="320"/>
    </location>
</feature>
<feature type="active site" description="Proton acceptor" evidence="1">
    <location>
        <position position="176"/>
    </location>
</feature>
<feature type="binding site" evidence="1">
    <location>
        <begin position="10"/>
        <end position="15"/>
    </location>
    <ligand>
        <name>NAD(+)</name>
        <dbReference type="ChEBI" id="CHEBI:57540"/>
    </ligand>
</feature>
<feature type="binding site" evidence="1">
    <location>
        <position position="34"/>
    </location>
    <ligand>
        <name>NAD(+)</name>
        <dbReference type="ChEBI" id="CHEBI:57540"/>
    </ligand>
</feature>
<feature type="binding site" evidence="1">
    <location>
        <position position="83"/>
    </location>
    <ligand>
        <name>substrate</name>
    </ligand>
</feature>
<feature type="binding site" evidence="1">
    <location>
        <position position="89"/>
    </location>
    <ligand>
        <name>substrate</name>
    </ligand>
</feature>
<feature type="binding site" evidence="1">
    <location>
        <position position="96"/>
    </location>
    <ligand>
        <name>NAD(+)</name>
        <dbReference type="ChEBI" id="CHEBI:57540"/>
    </ligand>
</feature>
<feature type="binding site" evidence="1">
    <location>
        <begin position="119"/>
        <end position="121"/>
    </location>
    <ligand>
        <name>NAD(+)</name>
        <dbReference type="ChEBI" id="CHEBI:57540"/>
    </ligand>
</feature>
<feature type="binding site" evidence="1">
    <location>
        <position position="121"/>
    </location>
    <ligand>
        <name>substrate</name>
    </ligand>
</feature>
<feature type="binding site" evidence="1">
    <location>
        <position position="152"/>
    </location>
    <ligand>
        <name>substrate</name>
    </ligand>
</feature>
<protein>
    <recommendedName>
        <fullName evidence="1">Malate dehydrogenase</fullName>
        <ecNumber evidence="1">1.1.1.37</ecNumber>
    </recommendedName>
</protein>